<keyword id="KW-0066">ATP synthesis</keyword>
<keyword id="KW-1003">Cell membrane</keyword>
<keyword id="KW-0375">Hydrogen ion transport</keyword>
<keyword id="KW-0406">Ion transport</keyword>
<keyword id="KW-0472">Membrane</keyword>
<keyword id="KW-0813">Transport</keyword>
<gene>
    <name evidence="1" type="primary">atpC</name>
    <name type="ordered locus">PYRAB17630</name>
    <name type="ORF">PAB1183</name>
</gene>
<comment type="function">
    <text evidence="1">Component of the A-type ATP synthase that produces ATP from ADP in the presence of a proton gradient across the membrane.</text>
</comment>
<comment type="subunit">
    <text evidence="1">Has multiple subunits with at least A(3), B(3), C, D, E, F, H, I and proteolipid K(x).</text>
</comment>
<comment type="subcellular location">
    <subcellularLocation>
        <location evidence="1">Cell membrane</location>
        <topology evidence="1">Peripheral membrane protein</topology>
    </subcellularLocation>
</comment>
<comment type="similarity">
    <text evidence="1">Belongs to the V-ATPase V0D/AC39 subunit family.</text>
</comment>
<feature type="chain" id="PRO_0000119369" description="A-type ATP synthase subunit C">
    <location>
        <begin position="1"/>
        <end position="370"/>
    </location>
</feature>
<protein>
    <recommendedName>
        <fullName evidence="1">A-type ATP synthase subunit C</fullName>
    </recommendedName>
</protein>
<proteinExistence type="inferred from homology"/>
<name>AATC_PYRAB</name>
<organism>
    <name type="scientific">Pyrococcus abyssi (strain GE5 / Orsay)</name>
    <dbReference type="NCBI Taxonomy" id="272844"/>
    <lineage>
        <taxon>Archaea</taxon>
        <taxon>Methanobacteriati</taxon>
        <taxon>Methanobacteriota</taxon>
        <taxon>Thermococci</taxon>
        <taxon>Thermococcales</taxon>
        <taxon>Thermococcaceae</taxon>
        <taxon>Pyrococcus</taxon>
    </lineage>
</organism>
<evidence type="ECO:0000255" key="1">
    <source>
        <dbReference type="HAMAP-Rule" id="MF_00314"/>
    </source>
</evidence>
<dbReference type="EMBL" id="AJ248288">
    <property type="protein sequence ID" value="CAB50668.1"/>
    <property type="molecule type" value="Genomic_DNA"/>
</dbReference>
<dbReference type="EMBL" id="HE613800">
    <property type="protein sequence ID" value="CCE71237.1"/>
    <property type="molecule type" value="Genomic_DNA"/>
</dbReference>
<dbReference type="PIR" id="F75028">
    <property type="entry name" value="F75028"/>
</dbReference>
<dbReference type="RefSeq" id="WP_010868882.1">
    <property type="nucleotide sequence ID" value="NC_000868.1"/>
</dbReference>
<dbReference type="SMR" id="Q9UXU5"/>
<dbReference type="STRING" id="272844.PAB1183"/>
<dbReference type="KEGG" id="pab:PAB1183"/>
<dbReference type="PATRIC" id="fig|272844.11.peg.1882"/>
<dbReference type="eggNOG" id="arCOG02459">
    <property type="taxonomic scope" value="Archaea"/>
</dbReference>
<dbReference type="HOGENOM" id="CLU_059311_0_0_2"/>
<dbReference type="OrthoDB" id="4272at2157"/>
<dbReference type="PhylomeDB" id="Q9UXU5"/>
<dbReference type="Proteomes" id="UP000000810">
    <property type="component" value="Chromosome"/>
</dbReference>
<dbReference type="Proteomes" id="UP000009139">
    <property type="component" value="Chromosome"/>
</dbReference>
<dbReference type="GO" id="GO:0005886">
    <property type="term" value="C:plasma membrane"/>
    <property type="evidence" value="ECO:0007669"/>
    <property type="project" value="UniProtKB-SubCell"/>
</dbReference>
<dbReference type="GO" id="GO:0033179">
    <property type="term" value="C:proton-transporting V-type ATPase, V0 domain"/>
    <property type="evidence" value="ECO:0007669"/>
    <property type="project" value="InterPro"/>
</dbReference>
<dbReference type="GO" id="GO:0005524">
    <property type="term" value="F:ATP binding"/>
    <property type="evidence" value="ECO:0007669"/>
    <property type="project" value="UniProtKB-UniRule"/>
</dbReference>
<dbReference type="GO" id="GO:0046933">
    <property type="term" value="F:proton-transporting ATP synthase activity, rotational mechanism"/>
    <property type="evidence" value="ECO:0007669"/>
    <property type="project" value="UniProtKB-UniRule"/>
</dbReference>
<dbReference type="GO" id="GO:0046961">
    <property type="term" value="F:proton-transporting ATPase activity, rotational mechanism"/>
    <property type="evidence" value="ECO:0007669"/>
    <property type="project" value="InterPro"/>
</dbReference>
<dbReference type="GO" id="GO:0042777">
    <property type="term" value="P:proton motive force-driven plasma membrane ATP synthesis"/>
    <property type="evidence" value="ECO:0007669"/>
    <property type="project" value="UniProtKB-UniRule"/>
</dbReference>
<dbReference type="Gene3D" id="1.10.132.50">
    <property type="entry name" value="ATP synthase (C/AC39) subunit, domain 3"/>
    <property type="match status" value="1"/>
</dbReference>
<dbReference type="Gene3D" id="1.20.1690.10">
    <property type="entry name" value="V-type ATP synthase subunit C domain"/>
    <property type="match status" value="2"/>
</dbReference>
<dbReference type="HAMAP" id="MF_00314">
    <property type="entry name" value="ATP_synth_C_arch"/>
    <property type="match status" value="1"/>
</dbReference>
<dbReference type="InterPro" id="IPR036079">
    <property type="entry name" value="ATPase_csu/dsu_sf"/>
</dbReference>
<dbReference type="InterPro" id="IPR014272">
    <property type="entry name" value="ATPase_V0-cplx_csu"/>
</dbReference>
<dbReference type="InterPro" id="IPR002843">
    <property type="entry name" value="ATPase_V0-cplx_csu/dsu"/>
</dbReference>
<dbReference type="InterPro" id="IPR050873">
    <property type="entry name" value="V-ATPase_V0D/AC39_subunit"/>
</dbReference>
<dbReference type="InterPro" id="IPR035067">
    <property type="entry name" value="V-type_ATPase_csu/dsu"/>
</dbReference>
<dbReference type="InterPro" id="IPR044911">
    <property type="entry name" value="V-type_ATPase_csu/dsu_dom_3"/>
</dbReference>
<dbReference type="NCBIfam" id="TIGR02923">
    <property type="entry name" value="AhaC"/>
    <property type="match status" value="1"/>
</dbReference>
<dbReference type="NCBIfam" id="NF002269">
    <property type="entry name" value="PRK01198.1-5"/>
    <property type="match status" value="1"/>
</dbReference>
<dbReference type="PANTHER" id="PTHR38682">
    <property type="entry name" value="V-TYPE ATP SYNTHASE SUBUNIT C"/>
    <property type="match status" value="1"/>
</dbReference>
<dbReference type="PANTHER" id="PTHR38682:SF1">
    <property type="entry name" value="V-TYPE ATP SYNTHASE SUBUNIT C"/>
    <property type="match status" value="1"/>
</dbReference>
<dbReference type="Pfam" id="PF01992">
    <property type="entry name" value="vATP-synt_AC39"/>
    <property type="match status" value="1"/>
</dbReference>
<dbReference type="SUPFAM" id="SSF103486">
    <property type="entry name" value="V-type ATP synthase subunit C"/>
    <property type="match status" value="1"/>
</dbReference>
<accession>Q9UXU5</accession>
<accession>G8ZKU6</accession>
<reference key="1">
    <citation type="journal article" date="2003" name="Mol. Microbiol.">
        <title>An integrated analysis of the genome of the hyperthermophilic archaeon Pyrococcus abyssi.</title>
        <authorList>
            <person name="Cohen G.N."/>
            <person name="Barbe V."/>
            <person name="Flament D."/>
            <person name="Galperin M."/>
            <person name="Heilig R."/>
            <person name="Lecompte O."/>
            <person name="Poch O."/>
            <person name="Prieur D."/>
            <person name="Querellou J."/>
            <person name="Ripp R."/>
            <person name="Thierry J.-C."/>
            <person name="Van der Oost J."/>
            <person name="Weissenbach J."/>
            <person name="Zivanovic Y."/>
            <person name="Forterre P."/>
        </authorList>
    </citation>
    <scope>NUCLEOTIDE SEQUENCE [LARGE SCALE GENOMIC DNA]</scope>
    <source>
        <strain>GE5 / Orsay</strain>
    </source>
</reference>
<reference key="2">
    <citation type="journal article" date="2012" name="Curr. Microbiol.">
        <title>Re-annotation of two hyperthermophilic archaea Pyrococcus abyssi GE5 and Pyrococcus furiosus DSM 3638.</title>
        <authorList>
            <person name="Gao J."/>
            <person name="Wang J."/>
        </authorList>
    </citation>
    <scope>GENOME REANNOTATION</scope>
    <source>
        <strain>GE5 / Orsay</strain>
    </source>
</reference>
<sequence>MEWSTLTTIFDTSLAVVFTWVAYKTGQIIWKYTPYSYPNARIRAMEARLLTDQRFSELAESKSLQNFVVSLEDTDYGKRLTSLQSYNIEDVERALDLSLVDVIELMVKIMPKRIKGLFEIMLEEWDVRNIINVVKAKLSNMPPQDFIMPAGKMLQKVKAMAEAKTMEEMLVILEGTDYEEPLRRLLLNEITLQEFELELYKVHYSKLLRYVNSRKGEEKIIASEFVNMLIDYTNISTLLRAKLSSLAQEDIRKLIIPGGTLSKSTIEAMINSEDVVMALGELEGTKYGEVLREVREAVESGNIESVEIALRKYILRRMKELSQFYPLSVAVAVAYLLQKESEVRKLKAIAKLIEDGVKPEKIKEMVGELA</sequence>